<feature type="chain" id="PRO_1000078805" description="Bifunctional uridylyltransferase/uridylyl-removing enzyme">
    <location>
        <begin position="1"/>
        <end position="890"/>
    </location>
</feature>
<feature type="domain" description="HD" evidence="2">
    <location>
        <begin position="468"/>
        <end position="590"/>
    </location>
</feature>
<feature type="domain" description="ACT 1" evidence="1">
    <location>
        <begin position="709"/>
        <end position="789"/>
    </location>
</feature>
<feature type="domain" description="ACT 2" evidence="1">
    <location>
        <begin position="816"/>
        <end position="890"/>
    </location>
</feature>
<feature type="region of interest" description="Uridylyltransferase">
    <location>
        <begin position="1"/>
        <end position="349"/>
    </location>
</feature>
<feature type="region of interest" description="Uridylyl-removing">
    <location>
        <begin position="350"/>
        <end position="708"/>
    </location>
</feature>
<keyword id="KW-0378">Hydrolase</keyword>
<keyword id="KW-0460">Magnesium</keyword>
<keyword id="KW-0511">Multifunctional enzyme</keyword>
<keyword id="KW-0548">Nucleotidyltransferase</keyword>
<keyword id="KW-0677">Repeat</keyword>
<keyword id="KW-0808">Transferase</keyword>
<name>GLND_ECOLC</name>
<sequence length="890" mass="102405">MNTLPEQYANTALPTLPGQPQNPCVWPRDELTVGGIKAHIDTFQRWLGDAFDNGISAEQLIEARTEFIDQLLQRLWIEAGFSQIADLALVAVGGYGRGELHPLSDIDLLILSRKKLPDDQAQKVGELLTLLWDVKLEVGHSVRTLEECILEGLSDLTVATNLIESRLLIGDVALFLELQKHIFSEGFWPSDKFYAAKVEEQNQRHQRYHGTSYNLEPDIKSSPGGLRDIHTLQWVARRHFGATSLDEMVGFGFLTSAERAELNECLHILWRIRFALHLVVSRYDNRLLFDRQLSVAQRLNYSGEGNEPVERMMKDYFRVTRRVSELNQMLLQLFDEAILALPADEKPRPIDDEFQLRGTLIDLRDETLFMRQPEAILRMFYTMVRNSAITGIYSTTLRQLRHARRHLQQPLCNIPEARKLFLSILRHPGAVRRGLLPMHRHSVLGAYMPQWSHIVGQMQFDLFHAYTVDEHTIRVMLKLESFASEETRQRHPLCVDVWPRLPSTELIFIAALFHDIAKGRGGDHSILGAQDVVHFAELHGLNSRETQLVAWLVRQHLLMSVTAQRRDIQDPEVIKQFAEEVQTENRLRYLVCLTVADICATNETLWNSWKQSLLRELYFATEKQLRRGMQNTPDMRERVRHHQLQALALLRMDNIDEEALHQIWSRCRANYFVRHSPNQLAWHARHLLQHDLSKPLVLLSPQATRGGTEIFIWSPDRPYLFAAVCAELDRRNLSVHDAQIFTTRDGMAMDTFIVLEPDGNPLSADRHEVIRFGLEQVLTQSSWQPPQPRRQPAKLRHFTVETEVTFLPTHTDRKSFLELIALDQPGLLARVGKIFADLGISLHGARITTIGERVEDLFIIATADRRALNNELQQEVHQRLTEALNPNDKG</sequence>
<gene>
    <name evidence="1" type="primary">glnD</name>
    <name type="ordered locus">EcolC_3493</name>
</gene>
<proteinExistence type="inferred from homology"/>
<protein>
    <recommendedName>
        <fullName evidence="1">Bifunctional uridylyltransferase/uridylyl-removing enzyme</fullName>
        <shortName evidence="1">UTase/UR</shortName>
    </recommendedName>
    <alternativeName>
        <fullName evidence="1">Bifunctional [protein-PII] modification enzyme</fullName>
    </alternativeName>
    <alternativeName>
        <fullName evidence="1">Bifunctional nitrogen sensor protein</fullName>
    </alternativeName>
    <domain>
        <recommendedName>
            <fullName evidence="1">[Protein-PII] uridylyltransferase</fullName>
            <shortName evidence="1">PII uridylyltransferase</shortName>
            <shortName evidence="1">UTase</shortName>
            <ecNumber evidence="1">2.7.7.59</ecNumber>
        </recommendedName>
    </domain>
    <domain>
        <recommendedName>
            <fullName evidence="1">[Protein-PII]-UMP uridylyl-removing enzyme</fullName>
            <shortName evidence="1">UR</shortName>
            <ecNumber evidence="1">3.1.4.-</ecNumber>
        </recommendedName>
    </domain>
</protein>
<comment type="function">
    <text evidence="1">Modifies, by uridylylation and deuridylylation, the PII regulatory proteins (GlnB and homologs), in response to the nitrogen status of the cell that GlnD senses through the glutamine level. Under low glutamine levels, catalyzes the conversion of the PII proteins and UTP to PII-UMP and PPi, while under higher glutamine levels, GlnD hydrolyzes PII-UMP to PII and UMP (deuridylylation). Thus, controls uridylylation state and activity of the PII proteins, and plays an important role in the regulation of nitrogen assimilation and metabolism.</text>
</comment>
<comment type="catalytic activity">
    <reaction evidence="1">
        <text>[protein-PII]-L-tyrosine + UTP = [protein-PII]-uridylyl-L-tyrosine + diphosphate</text>
        <dbReference type="Rhea" id="RHEA:13673"/>
        <dbReference type="Rhea" id="RHEA-COMP:12147"/>
        <dbReference type="Rhea" id="RHEA-COMP:12148"/>
        <dbReference type="ChEBI" id="CHEBI:33019"/>
        <dbReference type="ChEBI" id="CHEBI:46398"/>
        <dbReference type="ChEBI" id="CHEBI:46858"/>
        <dbReference type="ChEBI" id="CHEBI:90602"/>
        <dbReference type="EC" id="2.7.7.59"/>
    </reaction>
</comment>
<comment type="catalytic activity">
    <reaction evidence="1">
        <text>[protein-PII]-uridylyl-L-tyrosine + H2O = [protein-PII]-L-tyrosine + UMP + H(+)</text>
        <dbReference type="Rhea" id="RHEA:48600"/>
        <dbReference type="Rhea" id="RHEA-COMP:12147"/>
        <dbReference type="Rhea" id="RHEA-COMP:12148"/>
        <dbReference type="ChEBI" id="CHEBI:15377"/>
        <dbReference type="ChEBI" id="CHEBI:15378"/>
        <dbReference type="ChEBI" id="CHEBI:46858"/>
        <dbReference type="ChEBI" id="CHEBI:57865"/>
        <dbReference type="ChEBI" id="CHEBI:90602"/>
    </reaction>
</comment>
<comment type="cofactor">
    <cofactor evidence="1">
        <name>Mg(2+)</name>
        <dbReference type="ChEBI" id="CHEBI:18420"/>
    </cofactor>
</comment>
<comment type="activity regulation">
    <text evidence="1">Uridylyltransferase (UTase) activity is inhibited by glutamine, while glutamine activates uridylyl-removing (UR) activity.</text>
</comment>
<comment type="domain">
    <text evidence="1">Has four distinct domains: an N-terminal nucleotidyltransferase (NT) domain responsible for UTase activity, a central HD domain that encodes UR activity, and two C-terminal ACT domains that seem to have a role in glutamine sensing.</text>
</comment>
<comment type="similarity">
    <text evidence="1">Belongs to the GlnD family.</text>
</comment>
<reference key="1">
    <citation type="submission" date="2008-02" db="EMBL/GenBank/DDBJ databases">
        <title>Complete sequence of Escherichia coli C str. ATCC 8739.</title>
        <authorList>
            <person name="Copeland A."/>
            <person name="Lucas S."/>
            <person name="Lapidus A."/>
            <person name="Glavina del Rio T."/>
            <person name="Dalin E."/>
            <person name="Tice H."/>
            <person name="Bruce D."/>
            <person name="Goodwin L."/>
            <person name="Pitluck S."/>
            <person name="Kiss H."/>
            <person name="Brettin T."/>
            <person name="Detter J.C."/>
            <person name="Han C."/>
            <person name="Kuske C.R."/>
            <person name="Schmutz J."/>
            <person name="Larimer F."/>
            <person name="Land M."/>
            <person name="Hauser L."/>
            <person name="Kyrpides N."/>
            <person name="Mikhailova N."/>
            <person name="Ingram L."/>
            <person name="Richardson P."/>
        </authorList>
    </citation>
    <scope>NUCLEOTIDE SEQUENCE [LARGE SCALE GENOMIC DNA]</scope>
    <source>
        <strain>ATCC 8739 / DSM 1576 / NBRC 3972 / NCIMB 8545 / WDCM 00012 / Crooks</strain>
    </source>
</reference>
<accession>B1IQH4</accession>
<dbReference type="EC" id="2.7.7.59" evidence="1"/>
<dbReference type="EC" id="3.1.4.-" evidence="1"/>
<dbReference type="EMBL" id="CP000946">
    <property type="protein sequence ID" value="ACA79107.1"/>
    <property type="molecule type" value="Genomic_DNA"/>
</dbReference>
<dbReference type="RefSeq" id="WP_001094566.1">
    <property type="nucleotide sequence ID" value="NZ_MTFT01000035.1"/>
</dbReference>
<dbReference type="SMR" id="B1IQH4"/>
<dbReference type="KEGG" id="ecl:EcolC_3493"/>
<dbReference type="HOGENOM" id="CLU_012833_0_0_6"/>
<dbReference type="GO" id="GO:0008773">
    <property type="term" value="F:[protein-PII] uridylyltransferase activity"/>
    <property type="evidence" value="ECO:0007669"/>
    <property type="project" value="UniProtKB-UniRule"/>
</dbReference>
<dbReference type="GO" id="GO:0008081">
    <property type="term" value="F:phosphoric diester hydrolase activity"/>
    <property type="evidence" value="ECO:0007669"/>
    <property type="project" value="UniProtKB-UniRule"/>
</dbReference>
<dbReference type="GO" id="GO:0006808">
    <property type="term" value="P:regulation of nitrogen utilization"/>
    <property type="evidence" value="ECO:0007669"/>
    <property type="project" value="UniProtKB-UniRule"/>
</dbReference>
<dbReference type="CDD" id="cd04899">
    <property type="entry name" value="ACT_ACR-UUR-like_2"/>
    <property type="match status" value="1"/>
</dbReference>
<dbReference type="CDD" id="cd04900">
    <property type="entry name" value="ACT_UUR-like_1"/>
    <property type="match status" value="1"/>
</dbReference>
<dbReference type="CDD" id="cd00077">
    <property type="entry name" value="HDc"/>
    <property type="match status" value="1"/>
</dbReference>
<dbReference type="CDD" id="cd05401">
    <property type="entry name" value="NT_GlnE_GlnD_like"/>
    <property type="match status" value="1"/>
</dbReference>
<dbReference type="FunFam" id="1.10.3210.10:FF:000005">
    <property type="entry name" value="Bifunctional uridylyltransferase/uridylyl-removing enzyme"/>
    <property type="match status" value="1"/>
</dbReference>
<dbReference type="Gene3D" id="1.10.3210.10">
    <property type="entry name" value="Hypothetical protein af1432"/>
    <property type="match status" value="1"/>
</dbReference>
<dbReference type="HAMAP" id="MF_00277">
    <property type="entry name" value="PII_uridylyl_transf"/>
    <property type="match status" value="1"/>
</dbReference>
<dbReference type="InterPro" id="IPR045865">
    <property type="entry name" value="ACT-like_dom_sf"/>
</dbReference>
<dbReference type="InterPro" id="IPR002912">
    <property type="entry name" value="ACT_dom"/>
</dbReference>
<dbReference type="InterPro" id="IPR003607">
    <property type="entry name" value="HD/PDEase_dom"/>
</dbReference>
<dbReference type="InterPro" id="IPR006674">
    <property type="entry name" value="HD_domain"/>
</dbReference>
<dbReference type="InterPro" id="IPR043519">
    <property type="entry name" value="NT_sf"/>
</dbReference>
<dbReference type="InterPro" id="IPR013546">
    <property type="entry name" value="PII_UdlTrfase/GS_AdlTrfase"/>
</dbReference>
<dbReference type="InterPro" id="IPR002934">
    <property type="entry name" value="Polymerase_NTP_transf_dom"/>
</dbReference>
<dbReference type="InterPro" id="IPR010043">
    <property type="entry name" value="UTase/UR"/>
</dbReference>
<dbReference type="NCBIfam" id="NF002487">
    <property type="entry name" value="PRK01759.1"/>
    <property type="match status" value="1"/>
</dbReference>
<dbReference type="NCBIfam" id="NF003448">
    <property type="entry name" value="PRK05007.1"/>
    <property type="match status" value="1"/>
</dbReference>
<dbReference type="NCBIfam" id="TIGR01693">
    <property type="entry name" value="UTase_glnD"/>
    <property type="match status" value="1"/>
</dbReference>
<dbReference type="PANTHER" id="PTHR47320">
    <property type="entry name" value="BIFUNCTIONAL URIDYLYLTRANSFERASE/URIDYLYL-REMOVING ENZYME"/>
    <property type="match status" value="1"/>
</dbReference>
<dbReference type="PANTHER" id="PTHR47320:SF1">
    <property type="entry name" value="BIFUNCTIONAL URIDYLYLTRANSFERASE_URIDYLYL-REMOVING ENZYME"/>
    <property type="match status" value="1"/>
</dbReference>
<dbReference type="Pfam" id="PF01842">
    <property type="entry name" value="ACT"/>
    <property type="match status" value="2"/>
</dbReference>
<dbReference type="Pfam" id="PF08335">
    <property type="entry name" value="GlnD_UR_UTase"/>
    <property type="match status" value="1"/>
</dbReference>
<dbReference type="Pfam" id="PF01966">
    <property type="entry name" value="HD"/>
    <property type="match status" value="1"/>
</dbReference>
<dbReference type="Pfam" id="PF01909">
    <property type="entry name" value="NTP_transf_2"/>
    <property type="match status" value="1"/>
</dbReference>
<dbReference type="PIRSF" id="PIRSF006288">
    <property type="entry name" value="PII_uridyltransf"/>
    <property type="match status" value="1"/>
</dbReference>
<dbReference type="SMART" id="SM00471">
    <property type="entry name" value="HDc"/>
    <property type="match status" value="1"/>
</dbReference>
<dbReference type="SUPFAM" id="SSF55021">
    <property type="entry name" value="ACT-like"/>
    <property type="match status" value="2"/>
</dbReference>
<dbReference type="SUPFAM" id="SSF109604">
    <property type="entry name" value="HD-domain/PDEase-like"/>
    <property type="match status" value="1"/>
</dbReference>
<dbReference type="SUPFAM" id="SSF81301">
    <property type="entry name" value="Nucleotidyltransferase"/>
    <property type="match status" value="1"/>
</dbReference>
<dbReference type="SUPFAM" id="SSF81593">
    <property type="entry name" value="Nucleotidyltransferase substrate binding subunit/domain"/>
    <property type="match status" value="1"/>
</dbReference>
<dbReference type="PROSITE" id="PS51671">
    <property type="entry name" value="ACT"/>
    <property type="match status" value="2"/>
</dbReference>
<dbReference type="PROSITE" id="PS51831">
    <property type="entry name" value="HD"/>
    <property type="match status" value="1"/>
</dbReference>
<organism>
    <name type="scientific">Escherichia coli (strain ATCC 8739 / DSM 1576 / NBRC 3972 / NCIMB 8545 / WDCM 00012 / Crooks)</name>
    <dbReference type="NCBI Taxonomy" id="481805"/>
    <lineage>
        <taxon>Bacteria</taxon>
        <taxon>Pseudomonadati</taxon>
        <taxon>Pseudomonadota</taxon>
        <taxon>Gammaproteobacteria</taxon>
        <taxon>Enterobacterales</taxon>
        <taxon>Enterobacteriaceae</taxon>
        <taxon>Escherichia</taxon>
    </lineage>
</organism>
<evidence type="ECO:0000255" key="1">
    <source>
        <dbReference type="HAMAP-Rule" id="MF_00277"/>
    </source>
</evidence>
<evidence type="ECO:0000255" key="2">
    <source>
        <dbReference type="PROSITE-ProRule" id="PRU01175"/>
    </source>
</evidence>